<gene>
    <name evidence="1" type="primary">atpD</name>
    <name type="ordered locus">NT01CX_1649</name>
</gene>
<comment type="function">
    <text evidence="1">Produces ATP from ADP in the presence of a proton gradient across the membrane.</text>
</comment>
<comment type="similarity">
    <text evidence="1">Belongs to the V-ATPase D subunit family.</text>
</comment>
<dbReference type="EMBL" id="CP000382">
    <property type="protein sequence ID" value="ABK61185.1"/>
    <property type="molecule type" value="Genomic_DNA"/>
</dbReference>
<dbReference type="RefSeq" id="WP_011721737.1">
    <property type="nucleotide sequence ID" value="NC_008593.1"/>
</dbReference>
<dbReference type="SMR" id="A0PZC8"/>
<dbReference type="STRING" id="386415.NT01CX_1649"/>
<dbReference type="KEGG" id="cno:NT01CX_1649"/>
<dbReference type="eggNOG" id="COG1394">
    <property type="taxonomic scope" value="Bacteria"/>
</dbReference>
<dbReference type="HOGENOM" id="CLU_069688_2_1_9"/>
<dbReference type="Proteomes" id="UP000008220">
    <property type="component" value="Chromosome"/>
</dbReference>
<dbReference type="GO" id="GO:0005524">
    <property type="term" value="F:ATP binding"/>
    <property type="evidence" value="ECO:0007669"/>
    <property type="project" value="UniProtKB-UniRule"/>
</dbReference>
<dbReference type="GO" id="GO:0046933">
    <property type="term" value="F:proton-transporting ATP synthase activity, rotational mechanism"/>
    <property type="evidence" value="ECO:0007669"/>
    <property type="project" value="UniProtKB-UniRule"/>
</dbReference>
<dbReference type="GO" id="GO:0046961">
    <property type="term" value="F:proton-transporting ATPase activity, rotational mechanism"/>
    <property type="evidence" value="ECO:0007669"/>
    <property type="project" value="InterPro"/>
</dbReference>
<dbReference type="GO" id="GO:0042777">
    <property type="term" value="P:proton motive force-driven plasma membrane ATP synthesis"/>
    <property type="evidence" value="ECO:0007669"/>
    <property type="project" value="UniProtKB-UniRule"/>
</dbReference>
<dbReference type="FunFam" id="1.10.287.3240:FF:000007">
    <property type="entry name" value="V-type ATP synthase subunit D"/>
    <property type="match status" value="1"/>
</dbReference>
<dbReference type="Gene3D" id="1.10.287.3240">
    <property type="match status" value="1"/>
</dbReference>
<dbReference type="HAMAP" id="MF_00271">
    <property type="entry name" value="ATP_synth_D_arch"/>
    <property type="match status" value="1"/>
</dbReference>
<dbReference type="InterPro" id="IPR002699">
    <property type="entry name" value="V_ATPase_D"/>
</dbReference>
<dbReference type="NCBIfam" id="NF001543">
    <property type="entry name" value="PRK00373.1-2"/>
    <property type="match status" value="1"/>
</dbReference>
<dbReference type="NCBIfam" id="TIGR00309">
    <property type="entry name" value="V_ATPase_subD"/>
    <property type="match status" value="1"/>
</dbReference>
<dbReference type="PANTHER" id="PTHR11671">
    <property type="entry name" value="V-TYPE ATP SYNTHASE SUBUNIT D"/>
    <property type="match status" value="1"/>
</dbReference>
<dbReference type="Pfam" id="PF01813">
    <property type="entry name" value="ATP-synt_D"/>
    <property type="match status" value="1"/>
</dbReference>
<reference key="1">
    <citation type="journal article" date="2006" name="Nat. Biotechnol.">
        <title>The genome and transcriptomes of the anti-tumor agent Clostridium novyi-NT.</title>
        <authorList>
            <person name="Bettegowda C."/>
            <person name="Huang X."/>
            <person name="Lin J."/>
            <person name="Cheong I."/>
            <person name="Kohli M."/>
            <person name="Szabo S.A."/>
            <person name="Zhang X."/>
            <person name="Diaz L.A. Jr."/>
            <person name="Velculescu V.E."/>
            <person name="Parmigiani G."/>
            <person name="Kinzler K.W."/>
            <person name="Vogelstein B."/>
            <person name="Zhou S."/>
        </authorList>
    </citation>
    <scope>NUCLEOTIDE SEQUENCE [LARGE SCALE GENOMIC DNA]</scope>
    <source>
        <strain>NT</strain>
    </source>
</reference>
<protein>
    <recommendedName>
        <fullName evidence="1">V-type ATP synthase subunit D</fullName>
    </recommendedName>
    <alternativeName>
        <fullName evidence="1">V-ATPase subunit D</fullName>
    </alternativeName>
</protein>
<organism>
    <name type="scientific">Clostridium novyi (strain NT)</name>
    <dbReference type="NCBI Taxonomy" id="386415"/>
    <lineage>
        <taxon>Bacteria</taxon>
        <taxon>Bacillati</taxon>
        <taxon>Bacillota</taxon>
        <taxon>Clostridia</taxon>
        <taxon>Eubacteriales</taxon>
        <taxon>Clostridiaceae</taxon>
        <taxon>Clostridium</taxon>
    </lineage>
</organism>
<evidence type="ECO:0000255" key="1">
    <source>
        <dbReference type="HAMAP-Rule" id="MF_00271"/>
    </source>
</evidence>
<name>VATD_CLONN</name>
<feature type="chain" id="PRO_1000059154" description="V-type ATP synthase subunit D">
    <location>
        <begin position="1"/>
        <end position="216"/>
    </location>
</feature>
<sequence>MARLNVNPTRMELTRLKKRLTTATRGHKLLKDKQDELMRRFIDLVKYNNELRKDVEEMIKNSLKDFVMARALMSSEILEEAIMYPKEKISLDVNIKNIMSVNVPEMKFKRLLEDDNGSIYPYGYSNTSAELDDAIEKLYSILPKLLELAEVEKSTQLMADEIEKTRRRVNALEYMTIPQLEETIKYIQMKLEENERGALTRLMKVKTMLEKEQESV</sequence>
<keyword id="KW-0066">ATP synthesis</keyword>
<keyword id="KW-0375">Hydrogen ion transport</keyword>
<keyword id="KW-0406">Ion transport</keyword>
<keyword id="KW-1185">Reference proteome</keyword>
<keyword id="KW-0813">Transport</keyword>
<proteinExistence type="inferred from homology"/>
<accession>A0PZC8</accession>